<name>GLYA_THEAC</name>
<evidence type="ECO:0000255" key="1">
    <source>
        <dbReference type="HAMAP-Rule" id="MF_00051"/>
    </source>
</evidence>
<evidence type="ECO:0000305" key="2"/>
<proteinExistence type="inferred from homology"/>
<reference key="1">
    <citation type="journal article" date="2000" name="Nature">
        <title>The genome sequence of the thermoacidophilic scavenger Thermoplasma acidophilum.</title>
        <authorList>
            <person name="Ruepp A."/>
            <person name="Graml W."/>
            <person name="Santos-Martinez M.-L."/>
            <person name="Koretke K.K."/>
            <person name="Volker C."/>
            <person name="Mewes H.-W."/>
            <person name="Frishman D."/>
            <person name="Stocker S."/>
            <person name="Lupas A.N."/>
            <person name="Baumeister W."/>
        </authorList>
    </citation>
    <scope>NUCLEOTIDE SEQUENCE [LARGE SCALE GENOMIC DNA]</scope>
    <source>
        <strain>ATCC 25905 / DSM 1728 / JCM 9062 / NBRC 15155 / AMRC-C165</strain>
    </source>
</reference>
<comment type="function">
    <text evidence="1">Catalyzes the reversible interconversion of serine and glycine with a modified folate serving as the one-carbon carrier. Also exhibits a pteridine-independent aldolase activity toward beta-hydroxyamino acids, producing glycine and aldehydes, via a retro-aldol mechanism.</text>
</comment>
<comment type="cofactor">
    <cofactor evidence="1">
        <name>pyridoxal 5'-phosphate</name>
        <dbReference type="ChEBI" id="CHEBI:597326"/>
    </cofactor>
</comment>
<comment type="pathway">
    <text evidence="1">Amino-acid biosynthesis; glycine biosynthesis; glycine from L-serine: step 1/1.</text>
</comment>
<comment type="subunit">
    <text evidence="1">Homodimer.</text>
</comment>
<comment type="subcellular location">
    <subcellularLocation>
        <location evidence="1">Cytoplasm</location>
    </subcellularLocation>
</comment>
<comment type="similarity">
    <text evidence="1">Belongs to the SHMT family.</text>
</comment>
<comment type="sequence caution" evidence="2">
    <conflict type="erroneous initiation">
        <sequence resource="EMBL-CDS" id="CAC12627"/>
    </conflict>
</comment>
<organism>
    <name type="scientific">Thermoplasma acidophilum (strain ATCC 25905 / DSM 1728 / JCM 9062 / NBRC 15155 / AMRC-C165)</name>
    <dbReference type="NCBI Taxonomy" id="273075"/>
    <lineage>
        <taxon>Archaea</taxon>
        <taxon>Methanobacteriati</taxon>
        <taxon>Thermoplasmatota</taxon>
        <taxon>Thermoplasmata</taxon>
        <taxon>Thermoplasmatales</taxon>
        <taxon>Thermoplasmataceae</taxon>
        <taxon>Thermoplasma</taxon>
    </lineage>
</organism>
<gene>
    <name evidence="1" type="primary">glyA</name>
    <name type="ordered locus">Ta1509</name>
</gene>
<keyword id="KW-0028">Amino-acid biosynthesis</keyword>
<keyword id="KW-0963">Cytoplasm</keyword>
<keyword id="KW-0554">One-carbon metabolism</keyword>
<keyword id="KW-0663">Pyridoxal phosphate</keyword>
<keyword id="KW-1185">Reference proteome</keyword>
<keyword id="KW-0808">Transferase</keyword>
<accession>Q9HI38</accession>
<feature type="chain" id="PRO_0000113727" description="Serine hydroxymethyltransferase">
    <location>
        <begin position="1"/>
        <end position="426"/>
    </location>
</feature>
<feature type="binding site" evidence="1">
    <location>
        <position position="115"/>
    </location>
    <ligand>
        <name>(6S)-5,6,7,8-tetrahydrofolate</name>
        <dbReference type="ChEBI" id="CHEBI:57453"/>
    </ligand>
</feature>
<feature type="binding site" evidence="1">
    <location>
        <begin position="119"/>
        <end position="121"/>
    </location>
    <ligand>
        <name>(6S)-5,6,7,8-tetrahydrofolate</name>
        <dbReference type="ChEBI" id="CHEBI:57453"/>
    </ligand>
</feature>
<feature type="site" description="Plays an important role in substrate specificity" evidence="1">
    <location>
        <position position="224"/>
    </location>
</feature>
<feature type="modified residue" description="N6-(pyridoxal phosphate)lysine" evidence="1">
    <location>
        <position position="225"/>
    </location>
</feature>
<dbReference type="EC" id="2.1.2.-" evidence="1"/>
<dbReference type="EMBL" id="AL445067">
    <property type="protein sequence ID" value="CAC12627.1"/>
    <property type="status" value="ALT_INIT"/>
    <property type="molecule type" value="Genomic_DNA"/>
</dbReference>
<dbReference type="RefSeq" id="WP_048162191.1">
    <property type="nucleotide sequence ID" value="NC_002578.1"/>
</dbReference>
<dbReference type="SMR" id="Q9HI38"/>
<dbReference type="FunCoup" id="Q9HI38">
    <property type="interactions" value="281"/>
</dbReference>
<dbReference type="STRING" id="273075.gene:9572741"/>
<dbReference type="PaxDb" id="273075-Ta1509"/>
<dbReference type="EnsemblBacteria" id="CAC12627">
    <property type="protein sequence ID" value="CAC12627"/>
    <property type="gene ID" value="CAC12627"/>
</dbReference>
<dbReference type="KEGG" id="tac:Ta1509"/>
<dbReference type="eggNOG" id="arCOG00070">
    <property type="taxonomic scope" value="Archaea"/>
</dbReference>
<dbReference type="HOGENOM" id="CLU_022477_2_1_2"/>
<dbReference type="InParanoid" id="Q9HI38"/>
<dbReference type="OrthoDB" id="5821at2157"/>
<dbReference type="UniPathway" id="UPA00288">
    <property type="reaction ID" value="UER01023"/>
</dbReference>
<dbReference type="Proteomes" id="UP000001024">
    <property type="component" value="Chromosome"/>
</dbReference>
<dbReference type="GO" id="GO:0005737">
    <property type="term" value="C:cytoplasm"/>
    <property type="evidence" value="ECO:0007669"/>
    <property type="project" value="UniProtKB-SubCell"/>
</dbReference>
<dbReference type="GO" id="GO:0004372">
    <property type="term" value="F:glycine hydroxymethyltransferase activity"/>
    <property type="evidence" value="ECO:0007669"/>
    <property type="project" value="UniProtKB-UniRule"/>
</dbReference>
<dbReference type="GO" id="GO:0030170">
    <property type="term" value="F:pyridoxal phosphate binding"/>
    <property type="evidence" value="ECO:0007669"/>
    <property type="project" value="UniProtKB-UniRule"/>
</dbReference>
<dbReference type="GO" id="GO:0019264">
    <property type="term" value="P:glycine biosynthetic process from serine"/>
    <property type="evidence" value="ECO:0007669"/>
    <property type="project" value="UniProtKB-UniRule"/>
</dbReference>
<dbReference type="GO" id="GO:0035999">
    <property type="term" value="P:tetrahydrofolate interconversion"/>
    <property type="evidence" value="ECO:0007669"/>
    <property type="project" value="InterPro"/>
</dbReference>
<dbReference type="CDD" id="cd00378">
    <property type="entry name" value="SHMT"/>
    <property type="match status" value="1"/>
</dbReference>
<dbReference type="FunFam" id="3.90.1150.10:FF:000114">
    <property type="entry name" value="Serine hydroxymethyltransferase"/>
    <property type="match status" value="1"/>
</dbReference>
<dbReference type="Gene3D" id="3.90.1150.10">
    <property type="entry name" value="Aspartate Aminotransferase, domain 1"/>
    <property type="match status" value="1"/>
</dbReference>
<dbReference type="Gene3D" id="3.40.640.10">
    <property type="entry name" value="Type I PLP-dependent aspartate aminotransferase-like (Major domain)"/>
    <property type="match status" value="1"/>
</dbReference>
<dbReference type="HAMAP" id="MF_00051">
    <property type="entry name" value="SHMT"/>
    <property type="match status" value="1"/>
</dbReference>
<dbReference type="InterPro" id="IPR015424">
    <property type="entry name" value="PyrdxlP-dep_Trfase"/>
</dbReference>
<dbReference type="InterPro" id="IPR015421">
    <property type="entry name" value="PyrdxlP-dep_Trfase_major"/>
</dbReference>
<dbReference type="InterPro" id="IPR015422">
    <property type="entry name" value="PyrdxlP-dep_Trfase_small"/>
</dbReference>
<dbReference type="InterPro" id="IPR001085">
    <property type="entry name" value="Ser_HO-MeTrfase"/>
</dbReference>
<dbReference type="InterPro" id="IPR049943">
    <property type="entry name" value="Ser_HO-MeTrfase-like"/>
</dbReference>
<dbReference type="InterPro" id="IPR019798">
    <property type="entry name" value="Ser_HO-MeTrfase_PLP_BS"/>
</dbReference>
<dbReference type="InterPro" id="IPR039429">
    <property type="entry name" value="SHMT-like_dom"/>
</dbReference>
<dbReference type="NCBIfam" id="NF000586">
    <property type="entry name" value="PRK00011.1"/>
    <property type="match status" value="1"/>
</dbReference>
<dbReference type="PANTHER" id="PTHR11680">
    <property type="entry name" value="SERINE HYDROXYMETHYLTRANSFERASE"/>
    <property type="match status" value="1"/>
</dbReference>
<dbReference type="PANTHER" id="PTHR11680:SF35">
    <property type="entry name" value="SERINE HYDROXYMETHYLTRANSFERASE 1"/>
    <property type="match status" value="1"/>
</dbReference>
<dbReference type="Pfam" id="PF00464">
    <property type="entry name" value="SHMT"/>
    <property type="match status" value="1"/>
</dbReference>
<dbReference type="PIRSF" id="PIRSF000412">
    <property type="entry name" value="SHMT"/>
    <property type="match status" value="1"/>
</dbReference>
<dbReference type="SUPFAM" id="SSF53383">
    <property type="entry name" value="PLP-dependent transferases"/>
    <property type="match status" value="1"/>
</dbReference>
<dbReference type="PROSITE" id="PS00096">
    <property type="entry name" value="SHMT"/>
    <property type="match status" value="1"/>
</dbReference>
<sequence>MSYEDAEYIREMAMKHSEMFGEGIALIASENVMSPLAKEVMISDLESRYAEGLPHHRYYQGNYYVDLIEDRTNELLSKLFRTSQTDPRPISGTNANSAAIYALAGPGDLVATPSLSGGGHISAAEFGILGMRSVRTINYPYDMDTMTIDPDQASKMIIKEKPKVCLFGQSVFMFPAPLKEMAEAFHEVGCKVWYDGAHVLGLIAGGRFQDPLREGADIVTGSTHKTFPGPQHGVILGNTDDETWKAVRRAVFPGVLSNHHLNAMAALGITAAEELEFGKRYADDIISNAKVLAEELYANGFNVLAEKRGFTESHTMAVDVSKNGGGKYVAETLEKCGIILNKNLLPWDDNKKSQNPSGIRIGVQEATRVGMGKSEMKEIASLITRAIIRHEDPEKIKAEVKQLKSGFREVKYCYGKMDGYSYIKLI</sequence>
<protein>
    <recommendedName>
        <fullName evidence="1">Serine hydroxymethyltransferase</fullName>
        <shortName evidence="1">SHMT</shortName>
        <shortName evidence="1">Serine methylase</shortName>
        <ecNumber evidence="1">2.1.2.-</ecNumber>
    </recommendedName>
</protein>